<keyword id="KW-0963">Cytoplasm</keyword>
<keyword id="KW-0456">Lyase</keyword>
<keyword id="KW-0479">Metal-binding</keyword>
<keyword id="KW-0684">Rhamnose metabolism</keyword>
<keyword id="KW-0862">Zinc</keyword>
<organism>
    <name type="scientific">Salmonella enteritidis PT4 (strain P125109)</name>
    <dbReference type="NCBI Taxonomy" id="550537"/>
    <lineage>
        <taxon>Bacteria</taxon>
        <taxon>Pseudomonadati</taxon>
        <taxon>Pseudomonadota</taxon>
        <taxon>Gammaproteobacteria</taxon>
        <taxon>Enterobacterales</taxon>
        <taxon>Enterobacteriaceae</taxon>
        <taxon>Salmonella</taxon>
    </lineage>
</organism>
<evidence type="ECO:0000255" key="1">
    <source>
        <dbReference type="HAMAP-Rule" id="MF_00770"/>
    </source>
</evidence>
<dbReference type="EC" id="4.1.2.19" evidence="1"/>
<dbReference type="EMBL" id="AM933172">
    <property type="protein sequence ID" value="CAR35409.1"/>
    <property type="molecule type" value="Genomic_DNA"/>
</dbReference>
<dbReference type="RefSeq" id="WP_001179690.1">
    <property type="nucleotide sequence ID" value="NC_011294.1"/>
</dbReference>
<dbReference type="SMR" id="B5QWY1"/>
<dbReference type="KEGG" id="set:SEN3836"/>
<dbReference type="HOGENOM" id="CLU_076831_0_0_6"/>
<dbReference type="UniPathway" id="UPA00541">
    <property type="reaction ID" value="UER00603"/>
</dbReference>
<dbReference type="Proteomes" id="UP000000613">
    <property type="component" value="Chromosome"/>
</dbReference>
<dbReference type="GO" id="GO:0005829">
    <property type="term" value="C:cytosol"/>
    <property type="evidence" value="ECO:0007669"/>
    <property type="project" value="TreeGrafter"/>
</dbReference>
<dbReference type="GO" id="GO:0046872">
    <property type="term" value="F:metal ion binding"/>
    <property type="evidence" value="ECO:0007669"/>
    <property type="project" value="UniProtKB-KW"/>
</dbReference>
<dbReference type="GO" id="GO:0008994">
    <property type="term" value="F:rhamnulose-1-phosphate aldolase activity"/>
    <property type="evidence" value="ECO:0007669"/>
    <property type="project" value="UniProtKB-UniRule"/>
</dbReference>
<dbReference type="GO" id="GO:0019323">
    <property type="term" value="P:pentose catabolic process"/>
    <property type="evidence" value="ECO:0007669"/>
    <property type="project" value="TreeGrafter"/>
</dbReference>
<dbReference type="GO" id="GO:0019301">
    <property type="term" value="P:rhamnose catabolic process"/>
    <property type="evidence" value="ECO:0007669"/>
    <property type="project" value="UniProtKB-UniRule"/>
</dbReference>
<dbReference type="CDD" id="cd00398">
    <property type="entry name" value="Aldolase_II"/>
    <property type="match status" value="1"/>
</dbReference>
<dbReference type="FunFam" id="3.40.225.10:FF:000006">
    <property type="entry name" value="Rhamnulose-1-phosphate aldolase"/>
    <property type="match status" value="1"/>
</dbReference>
<dbReference type="Gene3D" id="3.40.225.10">
    <property type="entry name" value="Class II aldolase/adducin N-terminal domain"/>
    <property type="match status" value="1"/>
</dbReference>
<dbReference type="HAMAP" id="MF_00770">
    <property type="entry name" value="RhaD"/>
    <property type="match status" value="1"/>
</dbReference>
<dbReference type="InterPro" id="IPR050197">
    <property type="entry name" value="Aldolase_class_II_sugar_metab"/>
</dbReference>
<dbReference type="InterPro" id="IPR001303">
    <property type="entry name" value="Aldolase_II/adducin_N"/>
</dbReference>
<dbReference type="InterPro" id="IPR036409">
    <property type="entry name" value="Aldolase_II/adducin_N_sf"/>
</dbReference>
<dbReference type="InterPro" id="IPR013447">
    <property type="entry name" value="Rhamnulose-1-P_Aldolase"/>
</dbReference>
<dbReference type="NCBIfam" id="NF002963">
    <property type="entry name" value="PRK03634.1"/>
    <property type="match status" value="1"/>
</dbReference>
<dbReference type="NCBIfam" id="TIGR02624">
    <property type="entry name" value="rhamnu_1P_ald"/>
    <property type="match status" value="1"/>
</dbReference>
<dbReference type="PANTHER" id="PTHR22789">
    <property type="entry name" value="FUCULOSE PHOSPHATE ALDOLASE"/>
    <property type="match status" value="1"/>
</dbReference>
<dbReference type="PANTHER" id="PTHR22789:SF16">
    <property type="entry name" value="RHAMNULOSE-1-PHOSPHATE ALDOLASE"/>
    <property type="match status" value="1"/>
</dbReference>
<dbReference type="Pfam" id="PF00596">
    <property type="entry name" value="Aldolase_II"/>
    <property type="match status" value="1"/>
</dbReference>
<dbReference type="SMART" id="SM01007">
    <property type="entry name" value="Aldolase_II"/>
    <property type="match status" value="1"/>
</dbReference>
<dbReference type="SUPFAM" id="SSF53639">
    <property type="entry name" value="AraD/HMP-PK domain-like"/>
    <property type="match status" value="1"/>
</dbReference>
<accession>B5QWY1</accession>
<name>RHAD_SALEP</name>
<gene>
    <name evidence="1" type="primary">rhaD</name>
    <name type="ordered locus">SEN3836</name>
</gene>
<comment type="function">
    <text evidence="1">Catalyzes the reversible cleavage of L-rhamnulose-1-phosphate to dihydroxyacetone phosphate (DHAP) and L-lactaldehyde.</text>
</comment>
<comment type="catalytic activity">
    <reaction evidence="1">
        <text>L-rhamnulose 1-phosphate = (S)-lactaldehyde + dihydroxyacetone phosphate</text>
        <dbReference type="Rhea" id="RHEA:19689"/>
        <dbReference type="ChEBI" id="CHEBI:18041"/>
        <dbReference type="ChEBI" id="CHEBI:57642"/>
        <dbReference type="ChEBI" id="CHEBI:58313"/>
        <dbReference type="EC" id="4.1.2.19"/>
    </reaction>
</comment>
<comment type="cofactor">
    <cofactor evidence="1">
        <name>Zn(2+)</name>
        <dbReference type="ChEBI" id="CHEBI:29105"/>
    </cofactor>
    <text evidence="1">Binds 1 zinc ion per subunit.</text>
</comment>
<comment type="pathway">
    <text evidence="1">Carbohydrate degradation; L-rhamnose degradation; glycerone phosphate from L-rhamnose: step 3/3.</text>
</comment>
<comment type="subunit">
    <text evidence="1">Homotetramer.</text>
</comment>
<comment type="subcellular location">
    <subcellularLocation>
        <location evidence="1">Cytoplasm</location>
    </subcellularLocation>
</comment>
<comment type="similarity">
    <text evidence="1">Belongs to the aldolase class II family. RhaD subfamily.</text>
</comment>
<reference key="1">
    <citation type="journal article" date="2008" name="Genome Res.">
        <title>Comparative genome analysis of Salmonella enteritidis PT4 and Salmonella gallinarum 287/91 provides insights into evolutionary and host adaptation pathways.</title>
        <authorList>
            <person name="Thomson N.R."/>
            <person name="Clayton D.J."/>
            <person name="Windhorst D."/>
            <person name="Vernikos G."/>
            <person name="Davidson S."/>
            <person name="Churcher C."/>
            <person name="Quail M.A."/>
            <person name="Stevens M."/>
            <person name="Jones M.A."/>
            <person name="Watson M."/>
            <person name="Barron A."/>
            <person name="Layton A."/>
            <person name="Pickard D."/>
            <person name="Kingsley R.A."/>
            <person name="Bignell A."/>
            <person name="Clark L."/>
            <person name="Harris B."/>
            <person name="Ormond D."/>
            <person name="Abdellah Z."/>
            <person name="Brooks K."/>
            <person name="Cherevach I."/>
            <person name="Chillingworth T."/>
            <person name="Woodward J."/>
            <person name="Norberczak H."/>
            <person name="Lord A."/>
            <person name="Arrowsmith C."/>
            <person name="Jagels K."/>
            <person name="Moule S."/>
            <person name="Mungall K."/>
            <person name="Saunders M."/>
            <person name="Whitehead S."/>
            <person name="Chabalgoity J.A."/>
            <person name="Maskell D."/>
            <person name="Humphreys T."/>
            <person name="Roberts M."/>
            <person name="Barrow P.A."/>
            <person name="Dougan G."/>
            <person name="Parkhill J."/>
        </authorList>
    </citation>
    <scope>NUCLEOTIDE SEQUENCE [LARGE SCALE GENOMIC DNA]</scope>
    <source>
        <strain>P125109</strain>
    </source>
</reference>
<proteinExistence type="inferred from homology"/>
<protein>
    <recommendedName>
        <fullName evidence="1">Rhamnulose-1-phosphate aldolase</fullName>
        <ecNumber evidence="1">4.1.2.19</ecNumber>
    </recommendedName>
</protein>
<feature type="chain" id="PRO_1000193733" description="Rhamnulose-1-phosphate aldolase">
    <location>
        <begin position="1"/>
        <end position="275"/>
    </location>
</feature>
<feature type="active site" evidence="1">
    <location>
        <position position="117"/>
    </location>
</feature>
<feature type="binding site" evidence="1">
    <location>
        <position position="141"/>
    </location>
    <ligand>
        <name>Zn(2+)</name>
        <dbReference type="ChEBI" id="CHEBI:29105"/>
    </ligand>
</feature>
<feature type="binding site" evidence="1">
    <location>
        <position position="143"/>
    </location>
    <ligand>
        <name>Zn(2+)</name>
        <dbReference type="ChEBI" id="CHEBI:29105"/>
    </ligand>
</feature>
<feature type="binding site" evidence="1">
    <location>
        <position position="212"/>
    </location>
    <ligand>
        <name>Zn(2+)</name>
        <dbReference type="ChEBI" id="CHEBI:29105"/>
    </ligand>
</feature>
<sequence>MQNITDSWFVQGMIKATSDAWLKGWDERNGGNLTLRLDEADIAPFATNFHEKPRYIALSQPMPLLANTPFIVTGSGKFFRNVQLDPAANLGVVKIDSDGAGYHILWGLTHDAVPTSELPAHFLSHCERIKATHGKDRVIMHCHATNLIALTYVLENNTALITRKLWEGSTECLVVFPDGVGILPWMVPGTDEIGQATAQEMQKHSLVLWPFHGVFGSGPTLDETFGLIDTAEKSAEVLVKIYSMGGMKQTITREELVALGKRFGVTPLASAVALY</sequence>